<organism>
    <name type="scientific">Tropheryma whipplei (strain Twist)</name>
    <name type="common">Whipple's bacillus</name>
    <dbReference type="NCBI Taxonomy" id="203267"/>
    <lineage>
        <taxon>Bacteria</taxon>
        <taxon>Bacillati</taxon>
        <taxon>Actinomycetota</taxon>
        <taxon>Actinomycetes</taxon>
        <taxon>Micrococcales</taxon>
        <taxon>Tropherymataceae</taxon>
        <taxon>Tropheryma</taxon>
    </lineage>
</organism>
<feature type="chain" id="PRO_0000190418" description="Recombination protein RecR">
    <location>
        <begin position="1"/>
        <end position="198"/>
    </location>
</feature>
<feature type="domain" description="Toprim" evidence="1">
    <location>
        <begin position="79"/>
        <end position="174"/>
    </location>
</feature>
<feature type="zinc finger region" description="C4-type" evidence="1">
    <location>
        <begin position="56"/>
        <end position="71"/>
    </location>
</feature>
<dbReference type="EMBL" id="AE014184">
    <property type="protein sequence ID" value="AAO44806.1"/>
    <property type="molecule type" value="Genomic_DNA"/>
</dbReference>
<dbReference type="RefSeq" id="WP_011102742.1">
    <property type="nucleotide sequence ID" value="NC_004572.3"/>
</dbReference>
<dbReference type="SMR" id="Q83MQ8"/>
<dbReference type="STRING" id="203267.TWT_709"/>
<dbReference type="KEGG" id="twh:TWT_709"/>
<dbReference type="eggNOG" id="COG0353">
    <property type="taxonomic scope" value="Bacteria"/>
</dbReference>
<dbReference type="HOGENOM" id="CLU_060739_1_0_11"/>
<dbReference type="OrthoDB" id="9802672at2"/>
<dbReference type="Proteomes" id="UP000002200">
    <property type="component" value="Chromosome"/>
</dbReference>
<dbReference type="GO" id="GO:0003677">
    <property type="term" value="F:DNA binding"/>
    <property type="evidence" value="ECO:0007669"/>
    <property type="project" value="UniProtKB-UniRule"/>
</dbReference>
<dbReference type="GO" id="GO:0008270">
    <property type="term" value="F:zinc ion binding"/>
    <property type="evidence" value="ECO:0007669"/>
    <property type="project" value="UniProtKB-KW"/>
</dbReference>
<dbReference type="GO" id="GO:0006310">
    <property type="term" value="P:DNA recombination"/>
    <property type="evidence" value="ECO:0007669"/>
    <property type="project" value="UniProtKB-UniRule"/>
</dbReference>
<dbReference type="GO" id="GO:0006281">
    <property type="term" value="P:DNA repair"/>
    <property type="evidence" value="ECO:0007669"/>
    <property type="project" value="UniProtKB-UniRule"/>
</dbReference>
<dbReference type="CDD" id="cd01025">
    <property type="entry name" value="TOPRIM_recR"/>
    <property type="match status" value="1"/>
</dbReference>
<dbReference type="Gene3D" id="3.30.60.80">
    <property type="match status" value="1"/>
</dbReference>
<dbReference type="Gene3D" id="3.40.1360.10">
    <property type="match status" value="1"/>
</dbReference>
<dbReference type="Gene3D" id="6.10.250.240">
    <property type="match status" value="1"/>
</dbReference>
<dbReference type="Gene3D" id="1.10.8.420">
    <property type="entry name" value="RecR Domain 1"/>
    <property type="match status" value="1"/>
</dbReference>
<dbReference type="HAMAP" id="MF_00017">
    <property type="entry name" value="RecR"/>
    <property type="match status" value="1"/>
</dbReference>
<dbReference type="InterPro" id="IPR000093">
    <property type="entry name" value="DNA_Rcmb_RecR"/>
</dbReference>
<dbReference type="InterPro" id="IPR023627">
    <property type="entry name" value="Rcmb_RecR"/>
</dbReference>
<dbReference type="InterPro" id="IPR015967">
    <property type="entry name" value="Rcmb_RecR_Znf"/>
</dbReference>
<dbReference type="InterPro" id="IPR006171">
    <property type="entry name" value="TOPRIM_dom"/>
</dbReference>
<dbReference type="InterPro" id="IPR034137">
    <property type="entry name" value="TOPRIM_RecR"/>
</dbReference>
<dbReference type="NCBIfam" id="TIGR00615">
    <property type="entry name" value="recR"/>
    <property type="match status" value="1"/>
</dbReference>
<dbReference type="PANTHER" id="PTHR30446">
    <property type="entry name" value="RECOMBINATION PROTEIN RECR"/>
    <property type="match status" value="1"/>
</dbReference>
<dbReference type="PANTHER" id="PTHR30446:SF0">
    <property type="entry name" value="RECOMBINATION PROTEIN RECR"/>
    <property type="match status" value="1"/>
</dbReference>
<dbReference type="Pfam" id="PF21175">
    <property type="entry name" value="RecR_C"/>
    <property type="match status" value="1"/>
</dbReference>
<dbReference type="Pfam" id="PF21176">
    <property type="entry name" value="RecR_HhH"/>
    <property type="match status" value="1"/>
</dbReference>
<dbReference type="Pfam" id="PF02132">
    <property type="entry name" value="RecR_ZnF"/>
    <property type="match status" value="1"/>
</dbReference>
<dbReference type="Pfam" id="PF13662">
    <property type="entry name" value="Toprim_4"/>
    <property type="match status" value="1"/>
</dbReference>
<dbReference type="SMART" id="SM00493">
    <property type="entry name" value="TOPRIM"/>
    <property type="match status" value="1"/>
</dbReference>
<dbReference type="SUPFAM" id="SSF111304">
    <property type="entry name" value="Recombination protein RecR"/>
    <property type="match status" value="1"/>
</dbReference>
<dbReference type="PROSITE" id="PS01300">
    <property type="entry name" value="RECR"/>
    <property type="match status" value="1"/>
</dbReference>
<dbReference type="PROSITE" id="PS50880">
    <property type="entry name" value="TOPRIM"/>
    <property type="match status" value="1"/>
</dbReference>
<proteinExistence type="inferred from homology"/>
<protein>
    <recommendedName>
        <fullName evidence="1">Recombination protein RecR</fullName>
    </recommendedName>
</protein>
<evidence type="ECO:0000255" key="1">
    <source>
        <dbReference type="HAMAP-Rule" id="MF_00017"/>
    </source>
</evidence>
<gene>
    <name evidence="1" type="primary">recR</name>
    <name type="ordered locus">TWT_709</name>
</gene>
<name>RECR_TROWT</name>
<comment type="function">
    <text evidence="1">May play a role in DNA repair. It seems to be involved in an RecBC-independent recombinational process of DNA repair. It may act with RecF and RecO.</text>
</comment>
<comment type="similarity">
    <text evidence="1">Belongs to the RecR family.</text>
</comment>
<accession>Q83MQ8</accession>
<keyword id="KW-0227">DNA damage</keyword>
<keyword id="KW-0233">DNA recombination</keyword>
<keyword id="KW-0234">DNA repair</keyword>
<keyword id="KW-0479">Metal-binding</keyword>
<keyword id="KW-1185">Reference proteome</keyword>
<keyword id="KW-0862">Zinc</keyword>
<keyword id="KW-0863">Zinc-finger</keyword>
<reference key="1">
    <citation type="journal article" date="2003" name="Genome Res.">
        <title>Tropheryma whipplei twist: a human pathogenic Actinobacteria with a reduced genome.</title>
        <authorList>
            <person name="Raoult D."/>
            <person name="Ogata H."/>
            <person name="Audic S."/>
            <person name="Robert C."/>
            <person name="Suhre K."/>
            <person name="Drancourt M."/>
            <person name="Claverie J.-M."/>
        </authorList>
    </citation>
    <scope>NUCLEOTIDE SEQUENCE [LARGE SCALE GENOMIC DNA]</scope>
    <source>
        <strain>Twist</strain>
    </source>
</reference>
<sequence>MYVRIVQDLIRELGKLPGIGPKSAQRITFFILQNPSFDIDRLSETLQSVRKQVQFCKVCGNFSEEDECVICSDPRRDRGVICVVEEPKDVVAIEKTREFSGLYHVLGGAISPIDGVGPDDLNIRQLLQRLADGTITEVVLATDPNMEGEATASYIARVISAMRIRVSKLASGLPVGSDLEYADEITLGRALEGRQYIN</sequence>